<accession>Q6DH46</accession>
<evidence type="ECO:0000250" key="1"/>
<evidence type="ECO:0000250" key="2">
    <source>
        <dbReference type="UniProtKB" id="Q8TE99"/>
    </source>
</evidence>
<evidence type="ECO:0000255" key="3"/>
<evidence type="ECO:0000255" key="4">
    <source>
        <dbReference type="PROSITE-ProRule" id="PRU00498"/>
    </source>
</evidence>
<evidence type="ECO:0000256" key="5">
    <source>
        <dbReference type="SAM" id="MobiDB-lite"/>
    </source>
</evidence>
<evidence type="ECO:0000305" key="6"/>
<name>PXYP1_DANRE</name>
<gene>
    <name evidence="2" type="primary">pxylp1</name>
    <name type="synonym">acpl2</name>
    <name type="ORF">zgc:92652</name>
</gene>
<protein>
    <recommendedName>
        <fullName evidence="2">2-phosphoxylose phosphatase 1</fullName>
        <ecNumber evidence="2">3.1.3.-</ecNumber>
    </recommendedName>
    <alternativeName>
        <fullName>Acid phosphatase-like protein 2</fullName>
    </alternativeName>
</protein>
<dbReference type="EC" id="3.1.3.-" evidence="2"/>
<dbReference type="EMBL" id="BC076136">
    <property type="protein sequence ID" value="AAH76136.1"/>
    <property type="molecule type" value="mRNA"/>
</dbReference>
<dbReference type="RefSeq" id="NP_001002430.1">
    <property type="nucleotide sequence ID" value="NM_001002430.1"/>
</dbReference>
<dbReference type="SMR" id="Q6DH46"/>
<dbReference type="FunCoup" id="Q6DH46">
    <property type="interactions" value="188"/>
</dbReference>
<dbReference type="STRING" id="7955.ENSDARP00000059507"/>
<dbReference type="GlyCosmos" id="Q6DH46">
    <property type="glycosylation" value="3 sites, No reported glycans"/>
</dbReference>
<dbReference type="PaxDb" id="7955-ENSDARP00000111067"/>
<dbReference type="GeneID" id="436703"/>
<dbReference type="KEGG" id="dre:436703"/>
<dbReference type="AGR" id="ZFIN:ZDB-GENE-040718-127"/>
<dbReference type="CTD" id="92370"/>
<dbReference type="ZFIN" id="ZDB-GENE-040718-127">
    <property type="gene designation" value="pxylp1"/>
</dbReference>
<dbReference type="eggNOG" id="KOG3672">
    <property type="taxonomic scope" value="Eukaryota"/>
</dbReference>
<dbReference type="InParanoid" id="Q6DH46"/>
<dbReference type="OrthoDB" id="10262962at2759"/>
<dbReference type="PhylomeDB" id="Q6DH46"/>
<dbReference type="PRO" id="PR:Q6DH46"/>
<dbReference type="Proteomes" id="UP000000437">
    <property type="component" value="Chromosome 15"/>
</dbReference>
<dbReference type="GO" id="GO:0005794">
    <property type="term" value="C:Golgi apparatus"/>
    <property type="evidence" value="ECO:0000250"/>
    <property type="project" value="UniProtKB"/>
</dbReference>
<dbReference type="GO" id="GO:0000139">
    <property type="term" value="C:Golgi membrane"/>
    <property type="evidence" value="ECO:0007669"/>
    <property type="project" value="UniProtKB-SubCell"/>
</dbReference>
<dbReference type="GO" id="GO:0016791">
    <property type="term" value="F:phosphatase activity"/>
    <property type="evidence" value="ECO:0000250"/>
    <property type="project" value="UniProtKB"/>
</dbReference>
<dbReference type="GO" id="GO:0050650">
    <property type="term" value="P:chondroitin sulfate proteoglycan biosynthetic process"/>
    <property type="evidence" value="ECO:0000250"/>
    <property type="project" value="UniProtKB"/>
</dbReference>
<dbReference type="GO" id="GO:0006024">
    <property type="term" value="P:glycosaminoglycan biosynthetic process"/>
    <property type="evidence" value="ECO:0000250"/>
    <property type="project" value="UniProtKB"/>
</dbReference>
<dbReference type="GO" id="GO:0010909">
    <property type="term" value="P:positive regulation of heparan sulfate proteoglycan biosynthetic process"/>
    <property type="evidence" value="ECO:0000250"/>
    <property type="project" value="UniProtKB"/>
</dbReference>
<dbReference type="CDD" id="cd07061">
    <property type="entry name" value="HP_HAP_like"/>
    <property type="match status" value="1"/>
</dbReference>
<dbReference type="FunFam" id="3.40.50.1240:FF:000011">
    <property type="entry name" value="2-phosphoxylose phosphatase 1"/>
    <property type="match status" value="1"/>
</dbReference>
<dbReference type="Gene3D" id="3.40.50.1240">
    <property type="entry name" value="Phosphoglycerate mutase-like"/>
    <property type="match status" value="1"/>
</dbReference>
<dbReference type="InterPro" id="IPR033379">
    <property type="entry name" value="Acid_Pase_AS"/>
</dbReference>
<dbReference type="InterPro" id="IPR000560">
    <property type="entry name" value="His_Pase_clade-2"/>
</dbReference>
<dbReference type="InterPro" id="IPR029033">
    <property type="entry name" value="His_PPase_superfam"/>
</dbReference>
<dbReference type="InterPro" id="IPR050645">
    <property type="entry name" value="Histidine_acid_phosphatase"/>
</dbReference>
<dbReference type="PANTHER" id="PTHR11567:SF110">
    <property type="entry name" value="2-PHOSPHOXYLOSE PHOSPHATASE 1"/>
    <property type="match status" value="1"/>
</dbReference>
<dbReference type="PANTHER" id="PTHR11567">
    <property type="entry name" value="ACID PHOSPHATASE-RELATED"/>
    <property type="match status" value="1"/>
</dbReference>
<dbReference type="Pfam" id="PF00328">
    <property type="entry name" value="His_Phos_2"/>
    <property type="match status" value="1"/>
</dbReference>
<dbReference type="SUPFAM" id="SSF53254">
    <property type="entry name" value="Phosphoglycerate mutase-like"/>
    <property type="match status" value="1"/>
</dbReference>
<dbReference type="PROSITE" id="PS00616">
    <property type="entry name" value="HIS_ACID_PHOSPHAT_1"/>
    <property type="match status" value="1"/>
</dbReference>
<keyword id="KW-0325">Glycoprotein</keyword>
<keyword id="KW-0333">Golgi apparatus</keyword>
<keyword id="KW-0378">Hydrolase</keyword>
<keyword id="KW-0472">Membrane</keyword>
<keyword id="KW-1185">Reference proteome</keyword>
<keyword id="KW-0735">Signal-anchor</keyword>
<keyword id="KW-0812">Transmembrane</keyword>
<keyword id="KW-1133">Transmembrane helix</keyword>
<proteinExistence type="evidence at transcript level"/>
<comment type="function">
    <text evidence="2">Responsible for the 2-O-dephosphorylation of xylose in the glycosaminoglycan-protein linkage region of proteoglycans thereby regulating the amount of mature glycosaminoglycan (GAG) chains. Sulfated glycosaminoglycans (GAGs), including heparan sulfate and chondroitin sulfate, are synthesized on the so-called common GAG-protein linkage region (GlcUAbeta1-3Galbeta1-3Galbeta1-4Xylbeta1-O-Ser) of core proteins, which is formed by the stepwise addition of monosaccharide residues by the respective specific glycosyltransferases.</text>
</comment>
<comment type="catalytic activity">
    <reaction evidence="2">
        <text>3-O-[beta-D-GlcA-(1-&gt;3)-beta-D-Gal-(1-&gt;3)-beta-D-Gal-(1-&gt;4)-beta-D-2-O-P-Xyl]-L-seryl-[protein] + H2O = 3-O-(beta-D-GlcA-(1-&gt;3)-beta-D-Gal-(1-&gt;3)-beta-D-Gal-(1-&gt;4)-beta-D-Xyl)-L-seryl-[protein] + phosphate</text>
        <dbReference type="Rhea" id="RHEA:56512"/>
        <dbReference type="Rhea" id="RHEA-COMP:12573"/>
        <dbReference type="Rhea" id="RHEA-COMP:14559"/>
        <dbReference type="ChEBI" id="CHEBI:15377"/>
        <dbReference type="ChEBI" id="CHEBI:43474"/>
        <dbReference type="ChEBI" id="CHEBI:132093"/>
        <dbReference type="ChEBI" id="CHEBI:140495"/>
    </reaction>
</comment>
<comment type="subcellular location">
    <subcellularLocation>
        <location evidence="2">Golgi apparatus membrane</location>
        <topology evidence="3">Single-pass type II membrane protein</topology>
    </subcellularLocation>
</comment>
<comment type="similarity">
    <text evidence="6">Belongs to the histidine acid phosphatase family.</text>
</comment>
<reference key="1">
    <citation type="submission" date="2004-07" db="EMBL/GenBank/DDBJ databases">
        <authorList>
            <consortium name="NIH - Zebrafish Gene Collection (ZGC) project"/>
        </authorList>
    </citation>
    <scope>NUCLEOTIDE SEQUENCE [LARGE SCALE MRNA]</scope>
    <source>
        <tissue>Larval eye</tissue>
    </source>
</reference>
<sequence>MLARSRFILVLVVGALLAVLSFSLQYLHLIPTNPVAEQRSAGRSRKRVNPVLHTDPPAPDPIRDTHQYCNYPNLTEHGWEGHCPPDYKLLSVQVMIRHGDRFPLYSIPKTKKPTIDCILSEKRKPSHPLLASFISHMALGGRGHWDASLGSLPRLPSHSTCEMGELTQTGVVRQLKNGDHLRQAYISRHNLLAADWLPRQLWAETTGKSRTLQSGLAFLFGFLPHFDWSRLTVRQQWSTLFCGQSCDCPARNRYLDQEQRRQYRQRIADAELERTYVTMAKTLGVATKTLRAANPVDALLCHFCHGLPFPCSSTQTSSNAPDEGACLTLEHFAVIRRQQKDDELERREAGLYRRYAVLAAHPYLNRSAARLERIARGSQMRKSKEDAVFALASAHDVTMAPLLSALGLEGAGFPKFAARLVFELWSSPETKERRSDRKLDNMFIRVLYNGEDLTFDTAFCREHNRRSTQPLCPLGNFLSFVRKDMFSVVNATSYQQACHQTVL</sequence>
<feature type="chain" id="PRO_0000314927" description="2-phosphoxylose phosphatase 1">
    <location>
        <begin position="1"/>
        <end position="503"/>
    </location>
</feature>
<feature type="topological domain" description="Cytoplasmic" evidence="3">
    <location>
        <begin position="1"/>
        <end position="6"/>
    </location>
</feature>
<feature type="transmembrane region" description="Helical; Signal-anchor for type II membrane protein" evidence="3">
    <location>
        <begin position="7"/>
        <end position="27"/>
    </location>
</feature>
<feature type="topological domain" description="Lumenal" evidence="3">
    <location>
        <begin position="28"/>
        <end position="503"/>
    </location>
</feature>
<feature type="region of interest" description="Disordered" evidence="5">
    <location>
        <begin position="38"/>
        <end position="63"/>
    </location>
</feature>
<feature type="active site" description="Nucleophile" evidence="1">
    <location>
        <position position="98"/>
    </location>
</feature>
<feature type="active site" description="Proton donor" evidence="1">
    <location>
        <position position="396"/>
    </location>
</feature>
<feature type="glycosylation site" description="N-linked (GlcNAc...) asparagine" evidence="4">
    <location>
        <position position="73"/>
    </location>
</feature>
<feature type="glycosylation site" description="N-linked (GlcNAc...) asparagine" evidence="4">
    <location>
        <position position="365"/>
    </location>
</feature>
<feature type="glycosylation site" description="N-linked (GlcNAc...) asparagine" evidence="4">
    <location>
        <position position="490"/>
    </location>
</feature>
<organism>
    <name type="scientific">Danio rerio</name>
    <name type="common">Zebrafish</name>
    <name type="synonym">Brachydanio rerio</name>
    <dbReference type="NCBI Taxonomy" id="7955"/>
    <lineage>
        <taxon>Eukaryota</taxon>
        <taxon>Metazoa</taxon>
        <taxon>Chordata</taxon>
        <taxon>Craniata</taxon>
        <taxon>Vertebrata</taxon>
        <taxon>Euteleostomi</taxon>
        <taxon>Actinopterygii</taxon>
        <taxon>Neopterygii</taxon>
        <taxon>Teleostei</taxon>
        <taxon>Ostariophysi</taxon>
        <taxon>Cypriniformes</taxon>
        <taxon>Danionidae</taxon>
        <taxon>Danioninae</taxon>
        <taxon>Danio</taxon>
    </lineage>
</organism>